<comment type="function">
    <text evidence="1">DNA-dependent RNA polymerase catalyzes the transcription of DNA into RNA using the four ribonucleoside triphosphates as substrates.</text>
</comment>
<comment type="catalytic activity">
    <reaction evidence="1">
        <text>RNA(n) + a ribonucleoside 5'-triphosphate = RNA(n+1) + diphosphate</text>
        <dbReference type="Rhea" id="RHEA:21248"/>
        <dbReference type="Rhea" id="RHEA-COMP:14527"/>
        <dbReference type="Rhea" id="RHEA-COMP:17342"/>
        <dbReference type="ChEBI" id="CHEBI:33019"/>
        <dbReference type="ChEBI" id="CHEBI:61557"/>
        <dbReference type="ChEBI" id="CHEBI:140395"/>
        <dbReference type="EC" id="2.7.7.6"/>
    </reaction>
</comment>
<comment type="subunit">
    <text evidence="1">The RNAP catalytic core consists of 2 alpha, 1 beta, 1 beta' and 1 omega subunit. When a sigma factor is associated with the core the holoenzyme is formed, which can initiate transcription.</text>
</comment>
<comment type="similarity">
    <text evidence="1">Belongs to the RNA polymerase beta chain family.</text>
</comment>
<protein>
    <recommendedName>
        <fullName evidence="1">DNA-directed RNA polymerase subunit beta</fullName>
        <shortName evidence="1">RNAP subunit beta</shortName>
        <ecNumber evidence="1">2.7.7.6</ecNumber>
    </recommendedName>
    <alternativeName>
        <fullName evidence="1">RNA polymerase subunit beta</fullName>
    </alternativeName>
    <alternativeName>
        <fullName evidence="1">Transcriptase subunit beta</fullName>
    </alternativeName>
</protein>
<feature type="chain" id="PRO_1000214478" description="DNA-directed RNA polymerase subunit beta">
    <location>
        <begin position="1"/>
        <end position="1182"/>
    </location>
</feature>
<feature type="region of interest" description="Disordered" evidence="2">
    <location>
        <begin position="1150"/>
        <end position="1182"/>
    </location>
</feature>
<feature type="compositionally biased region" description="Acidic residues" evidence="2">
    <location>
        <begin position="1150"/>
        <end position="1162"/>
    </location>
</feature>
<feature type="compositionally biased region" description="Low complexity" evidence="2">
    <location>
        <begin position="1171"/>
        <end position="1182"/>
    </location>
</feature>
<name>RPOB_EXISA</name>
<proteinExistence type="inferred from homology"/>
<sequence length="1182" mass="131840">MTGQLVQYGRHRQRRSFARISEVLELPNLIEIQTASYEWFLREGLKEMFTDISPISDFTGNLVLEFIDYSLSEPKYSIDESKERDVTYSAPLRVKVRLQNKETGELKEQEVFMGDFPLMTESGTFIINGAERVIVSQLVRSPSVYYNAKLDKNGKRGFGATVIPNRGAWLELETDAKDIVYVRIDRTRKIPVTVLLRALGFGTDQEIIDLLGDDEYLRNTLEKDNTESTEKALIEIYERLRPGEPPTVENAKSLLVSRFFDPKRYDLANVGRYKMNKKLHLKNRLFGQKLAETLVDPETGEVLAEAGTILDRRNLDRILPHLENGLGYIDAEPTGGVAEGEPFGLQSIKVISPDDPDGERILNIIGNGNIDRSVKHITPADIIASINYFFNLLHEVGTTDDIDHLGNRRLRSVGELLQNQFRIGLSRMERVVKERMSIQDQNAITPQALINIRPVIASLKEFFGSSQLSQFMDQTNPLAELTHKRRLSALGPGGLTRERAGFEVRDVHYSHYGRMCPIETPEGPNIGLINSLSSYAKVNEYGFIEAPYRRVDPETGLVTGDIQYMTADEEDLYVVAQANMPLTEDGHFADEQVLCRFRGQNLSVEPSRVDYMDVSPKQVVSAATACIPFLENDDSNRALMGANMQRQAVPLLQPDSPIVGTGMEYVSAKDSGAAIVAKHPGVVERVTAREILIRRTSDVNGSEVSGDLDRYKLQKYVRSNQGTCYNQKPIIAAGDRVEKGEILADGPSMDMGELALGRNVVVAFMTWDGYNYEDAIIMSERLVKDDVYTSIHIEEYESESRDTKLGPEEITRDIPNVGDDALRNLDDRGIIRIGAEVKDGDILVGKVTPKGVTELTAEERLLHAIFGEKAREVRDTSLRVPNGGDGIILDVKVFDRENGDELSPGVNQMVRVYIVQKRKIHEGDKMAGRHGNKGVISRILPEEDMPYMPDGTPVDIMLNPLGVPSRMNIGQVLELHLGMAAKKLGIKVATPVFDGAREEDVWATIEEAGMDKDAKTRLYDGRTGEPFDNRVSVGVMYMIKLAHMVDDKLHARSTGPYSLVTQQPLGGKAQFGGQRFGEMEVWALEAYGAAYTLQEILTIKSDDTVGRVKAYEAIVKGESVPKAGVPESFRVLIKELQALGMEVKMMSADDEEVEMKDEDDDNIPNATSALEQVVQPTVTEEE</sequence>
<gene>
    <name evidence="1" type="primary">rpoB</name>
    <name type="ordered locus">EAT1b_1641</name>
</gene>
<dbReference type="EC" id="2.7.7.6" evidence="1"/>
<dbReference type="EMBL" id="CP001615">
    <property type="protein sequence ID" value="ACQ70567.1"/>
    <property type="molecule type" value="Genomic_DNA"/>
</dbReference>
<dbReference type="RefSeq" id="WP_012727685.1">
    <property type="nucleotide sequence ID" value="NC_012673.1"/>
</dbReference>
<dbReference type="SMR" id="C4KZQ4"/>
<dbReference type="STRING" id="360911.EAT1b_1641"/>
<dbReference type="KEGG" id="eat:EAT1b_1641"/>
<dbReference type="eggNOG" id="COG0085">
    <property type="taxonomic scope" value="Bacteria"/>
</dbReference>
<dbReference type="HOGENOM" id="CLU_000524_4_1_9"/>
<dbReference type="OrthoDB" id="9803954at2"/>
<dbReference type="Proteomes" id="UP000000716">
    <property type="component" value="Chromosome"/>
</dbReference>
<dbReference type="GO" id="GO:0000428">
    <property type="term" value="C:DNA-directed RNA polymerase complex"/>
    <property type="evidence" value="ECO:0007669"/>
    <property type="project" value="UniProtKB-KW"/>
</dbReference>
<dbReference type="GO" id="GO:0003677">
    <property type="term" value="F:DNA binding"/>
    <property type="evidence" value="ECO:0007669"/>
    <property type="project" value="UniProtKB-UniRule"/>
</dbReference>
<dbReference type="GO" id="GO:0003899">
    <property type="term" value="F:DNA-directed RNA polymerase activity"/>
    <property type="evidence" value="ECO:0007669"/>
    <property type="project" value="UniProtKB-UniRule"/>
</dbReference>
<dbReference type="GO" id="GO:0032549">
    <property type="term" value="F:ribonucleoside binding"/>
    <property type="evidence" value="ECO:0007669"/>
    <property type="project" value="InterPro"/>
</dbReference>
<dbReference type="GO" id="GO:0006351">
    <property type="term" value="P:DNA-templated transcription"/>
    <property type="evidence" value="ECO:0007669"/>
    <property type="project" value="UniProtKB-UniRule"/>
</dbReference>
<dbReference type="CDD" id="cd00653">
    <property type="entry name" value="RNA_pol_B_RPB2"/>
    <property type="match status" value="1"/>
</dbReference>
<dbReference type="Gene3D" id="2.40.50.100">
    <property type="match status" value="1"/>
</dbReference>
<dbReference type="Gene3D" id="2.40.50.150">
    <property type="match status" value="1"/>
</dbReference>
<dbReference type="Gene3D" id="3.90.1100.10">
    <property type="match status" value="2"/>
</dbReference>
<dbReference type="Gene3D" id="2.30.150.10">
    <property type="entry name" value="DNA-directed RNA polymerase, beta subunit, external 1 domain"/>
    <property type="match status" value="1"/>
</dbReference>
<dbReference type="Gene3D" id="2.40.270.10">
    <property type="entry name" value="DNA-directed RNA polymerase, subunit 2, domain 6"/>
    <property type="match status" value="1"/>
</dbReference>
<dbReference type="Gene3D" id="3.90.1800.10">
    <property type="entry name" value="RNA polymerase alpha subunit dimerisation domain"/>
    <property type="match status" value="1"/>
</dbReference>
<dbReference type="Gene3D" id="3.90.1110.10">
    <property type="entry name" value="RNA polymerase Rpb2, domain 2"/>
    <property type="match status" value="1"/>
</dbReference>
<dbReference type="HAMAP" id="MF_01321">
    <property type="entry name" value="RNApol_bact_RpoB"/>
    <property type="match status" value="1"/>
</dbReference>
<dbReference type="InterPro" id="IPR042107">
    <property type="entry name" value="DNA-dir_RNA_pol_bsu_ext_1_sf"/>
</dbReference>
<dbReference type="InterPro" id="IPR019462">
    <property type="entry name" value="DNA-dir_RNA_pol_bsu_external_1"/>
</dbReference>
<dbReference type="InterPro" id="IPR015712">
    <property type="entry name" value="DNA-dir_RNA_pol_su2"/>
</dbReference>
<dbReference type="InterPro" id="IPR007120">
    <property type="entry name" value="DNA-dir_RNAP_su2_dom"/>
</dbReference>
<dbReference type="InterPro" id="IPR037033">
    <property type="entry name" value="DNA-dir_RNAP_su2_hyb_sf"/>
</dbReference>
<dbReference type="InterPro" id="IPR010243">
    <property type="entry name" value="RNA_pol_bsu_bac"/>
</dbReference>
<dbReference type="InterPro" id="IPR007121">
    <property type="entry name" value="RNA_pol_bsu_CS"/>
</dbReference>
<dbReference type="InterPro" id="IPR007644">
    <property type="entry name" value="RNA_pol_bsu_protrusion"/>
</dbReference>
<dbReference type="InterPro" id="IPR007642">
    <property type="entry name" value="RNA_pol_Rpb2_2"/>
</dbReference>
<dbReference type="InterPro" id="IPR037034">
    <property type="entry name" value="RNA_pol_Rpb2_2_sf"/>
</dbReference>
<dbReference type="InterPro" id="IPR007645">
    <property type="entry name" value="RNA_pol_Rpb2_3"/>
</dbReference>
<dbReference type="InterPro" id="IPR007641">
    <property type="entry name" value="RNA_pol_Rpb2_7"/>
</dbReference>
<dbReference type="InterPro" id="IPR014724">
    <property type="entry name" value="RNA_pol_RPB2_OB-fold"/>
</dbReference>
<dbReference type="NCBIfam" id="NF001616">
    <property type="entry name" value="PRK00405.1"/>
    <property type="match status" value="1"/>
</dbReference>
<dbReference type="NCBIfam" id="TIGR02013">
    <property type="entry name" value="rpoB"/>
    <property type="match status" value="1"/>
</dbReference>
<dbReference type="PANTHER" id="PTHR20856">
    <property type="entry name" value="DNA-DIRECTED RNA POLYMERASE I SUBUNIT 2"/>
    <property type="match status" value="1"/>
</dbReference>
<dbReference type="Pfam" id="PF04563">
    <property type="entry name" value="RNA_pol_Rpb2_1"/>
    <property type="match status" value="1"/>
</dbReference>
<dbReference type="Pfam" id="PF04561">
    <property type="entry name" value="RNA_pol_Rpb2_2"/>
    <property type="match status" value="2"/>
</dbReference>
<dbReference type="Pfam" id="PF04565">
    <property type="entry name" value="RNA_pol_Rpb2_3"/>
    <property type="match status" value="1"/>
</dbReference>
<dbReference type="Pfam" id="PF10385">
    <property type="entry name" value="RNA_pol_Rpb2_45"/>
    <property type="match status" value="1"/>
</dbReference>
<dbReference type="Pfam" id="PF00562">
    <property type="entry name" value="RNA_pol_Rpb2_6"/>
    <property type="match status" value="1"/>
</dbReference>
<dbReference type="Pfam" id="PF04560">
    <property type="entry name" value="RNA_pol_Rpb2_7"/>
    <property type="match status" value="1"/>
</dbReference>
<dbReference type="SUPFAM" id="SSF64484">
    <property type="entry name" value="beta and beta-prime subunits of DNA dependent RNA-polymerase"/>
    <property type="match status" value="1"/>
</dbReference>
<dbReference type="PROSITE" id="PS01166">
    <property type="entry name" value="RNA_POL_BETA"/>
    <property type="match status" value="1"/>
</dbReference>
<keyword id="KW-0240">DNA-directed RNA polymerase</keyword>
<keyword id="KW-0548">Nucleotidyltransferase</keyword>
<keyword id="KW-0804">Transcription</keyword>
<keyword id="KW-0808">Transferase</keyword>
<organism>
    <name type="scientific">Exiguobacterium sp. (strain ATCC BAA-1283 / AT1b)</name>
    <dbReference type="NCBI Taxonomy" id="360911"/>
    <lineage>
        <taxon>Bacteria</taxon>
        <taxon>Bacillati</taxon>
        <taxon>Bacillota</taxon>
        <taxon>Bacilli</taxon>
        <taxon>Bacillales</taxon>
        <taxon>Bacillales Family XII. Incertae Sedis</taxon>
        <taxon>Exiguobacterium</taxon>
    </lineage>
</organism>
<accession>C4KZQ4</accession>
<reference key="1">
    <citation type="journal article" date="2011" name="J. Bacteriol.">
        <title>Complete genome sequence of the Thermophilic Bacterium Exiguobacterium sp. AT1b.</title>
        <authorList>
            <person name="Vishnivetskaya T.A."/>
            <person name="Lucas S."/>
            <person name="Copeland A."/>
            <person name="Lapidus A."/>
            <person name="Glavina del Rio T."/>
            <person name="Dalin E."/>
            <person name="Tice H."/>
            <person name="Bruce D.C."/>
            <person name="Goodwin L.A."/>
            <person name="Pitluck S."/>
            <person name="Saunders E."/>
            <person name="Brettin T."/>
            <person name="Detter C."/>
            <person name="Han C."/>
            <person name="Larimer F."/>
            <person name="Land M.L."/>
            <person name="Hauser L.J."/>
            <person name="Kyrpides N.C."/>
            <person name="Ovchinnikova G."/>
            <person name="Kathariou S."/>
            <person name="Ramaley R.F."/>
            <person name="Rodrigues D.F."/>
            <person name="Hendrix C."/>
            <person name="Richardson P."/>
            <person name="Tiedje J.M."/>
        </authorList>
    </citation>
    <scope>NUCLEOTIDE SEQUENCE [LARGE SCALE GENOMIC DNA]</scope>
    <source>
        <strain>ATCC BAA-1283 / AT1b</strain>
    </source>
</reference>
<evidence type="ECO:0000255" key="1">
    <source>
        <dbReference type="HAMAP-Rule" id="MF_01321"/>
    </source>
</evidence>
<evidence type="ECO:0000256" key="2">
    <source>
        <dbReference type="SAM" id="MobiDB-lite"/>
    </source>
</evidence>